<gene>
    <name type="primary">TY1B-MR1</name>
    <name type="synonym">YMRCTy1-3 POL</name>
    <name type="ordered locus">YMR045C</name>
    <name type="ORF">YM9532.10C</name>
</gene>
<comment type="function">
    <text evidence="1">Capsid protein (CA) is the structural component of the virus-like particle (VLP), forming the shell that encapsulates the retrotransposons dimeric RNA genome. The particles are assembled from trimer-clustered units and there are holes in the capsid shells that allow for the diffusion of macromolecules. CA also has nucleocapsid-like chaperone activity, promoting primer tRNA(i)-Met annealing to the multipartite primer-binding site (PBS), dimerization of Ty1 RNA and initiation of reverse transcription (By similarity).</text>
</comment>
<comment type="function">
    <text evidence="1">The aspartyl protease (PR) mediates the proteolytic cleavages of the Gag and Gag-Pol polyproteins after assembly of the VLP.</text>
</comment>
<comment type="function">
    <text evidence="1">Reverse transcriptase/ribonuclease H (RT) is a multifunctional enzyme that catalyzes the conversion of the retro-elements RNA genome into dsDNA within the VLP. The enzyme displays a DNA polymerase activity that can copy either DNA or RNA templates, and a ribonuclease H (RNase H) activity that cleaves the RNA strand of RNA-DNA heteroduplexes during plus-strand synthesis and hydrolyzes RNA primers. The conversion leads to a linear dsDNA copy of the retrotransposon that includes long terminal repeats (LTRs) at both ends (By similarity).</text>
</comment>
<comment type="function">
    <text evidence="1">Integrase (IN) targets the VLP to the nucleus, where a subparticle preintegration complex (PIC) containing at least integrase and the newly synthesized dsDNA copy of the retrotransposon must transit the nuclear membrane. Once in the nucleus, integrase performs the integration of the dsDNA into the host genome (By similarity).</text>
</comment>
<comment type="catalytic activity">
    <reaction>
        <text>DNA(n) + a 2'-deoxyribonucleoside 5'-triphosphate = DNA(n+1) + diphosphate</text>
        <dbReference type="Rhea" id="RHEA:22508"/>
        <dbReference type="Rhea" id="RHEA-COMP:17339"/>
        <dbReference type="Rhea" id="RHEA-COMP:17340"/>
        <dbReference type="ChEBI" id="CHEBI:33019"/>
        <dbReference type="ChEBI" id="CHEBI:61560"/>
        <dbReference type="ChEBI" id="CHEBI:173112"/>
        <dbReference type="EC" id="2.7.7.49"/>
    </reaction>
</comment>
<comment type="catalytic activity">
    <reaction>
        <text>DNA(n) + a 2'-deoxyribonucleoside 5'-triphosphate = DNA(n+1) + diphosphate</text>
        <dbReference type="Rhea" id="RHEA:22508"/>
        <dbReference type="Rhea" id="RHEA-COMP:17339"/>
        <dbReference type="Rhea" id="RHEA-COMP:17340"/>
        <dbReference type="ChEBI" id="CHEBI:33019"/>
        <dbReference type="ChEBI" id="CHEBI:61560"/>
        <dbReference type="ChEBI" id="CHEBI:173112"/>
        <dbReference type="EC" id="2.7.7.7"/>
    </reaction>
</comment>
<comment type="catalytic activity">
    <reaction>
        <text>Endonucleolytic cleavage to 5'-phosphomonoester.</text>
        <dbReference type="EC" id="3.1.26.4"/>
    </reaction>
</comment>
<comment type="subunit">
    <text evidence="1">The capsid protein forms a homotrimer, from which the VLPs are assembled. The protease is a homodimer, whose active site consists of two apposed aspartic acid residues (By similarity).</text>
</comment>
<comment type="subcellular location">
    <subcellularLocation>
        <location>Cytoplasm</location>
    </subcellularLocation>
    <subcellularLocation>
        <location evidence="1">Nucleus</location>
    </subcellularLocation>
</comment>
<comment type="alternative products">
    <event type="ribosomal frameshifting"/>
    <isoform>
        <id>Q04214-1</id>
        <name>Transposon Ty1-MR1 Gag-Pol polyprotein</name>
        <sequence type="displayed"/>
    </isoform>
    <isoform>
        <id>Q04215-1</id>
        <name>Transposon Ty1-MR1 Gag polyprotein</name>
        <sequence type="external"/>
    </isoform>
    <text evidence="1">The Gag-Pol polyprotein is generated by a +1 ribosomal frameshift. The ratio of Gag:Gag-Pol varies between 20:1 and 5:1 (By similarity).</text>
</comment>
<comment type="domain">
    <text evidence="1">The C-terminal RNA-binding region of CA is sufficient for all its nucleocapsid-like chaperone activities.</text>
</comment>
<comment type="domain">
    <text evidence="1">Integrase core domain contains the D-x(n)-D-x(35)-E motif, named for the phylogenetically conserved glutamic acid and aspartic acid residues and the invariant 35 amino acid spacing between the second and third acidic residues. Each acidic residue of the D,D(35)E motif is independently essential for the 3'-processing and strand transfer activities of purified integrase protein (By similarity).</text>
</comment>
<comment type="PTM">
    <text evidence="1">Initially, virus-like particles (VLPs) are composed of the structural unprocessed proteins Gag and Gag-Pol, and also contain the host initiator methionine tRNA (tRNA(i)-Met) which serves as a primer for minus-strand DNA synthesis, and a dimer of genomic Ty RNA. Processing of the polyproteins occurs within the particle and proceeds by an ordered pathway, called maturation. First, the protease (PR) is released by autocatalytic cleavage of the Gag-Pol polyprotein yielding capsid protein p45 and a Pol-p154 precursor protein. This cleavage is a prerequisite for subsequent processing of Pol-p154 at the remaining sites to release the mature structural and catalytic proteins. Maturation takes place prior to the RT reaction and is required to produce transposition-competent VLPs (By similarity).</text>
</comment>
<comment type="miscellaneous">
    <text>Retrotransposons are mobile genetic entities that are able to replicate via an RNA intermediate and a reverse transcription step. In contrast to retroviruses, retrotransposons are non-infectious, lack an envelope and remain intracellular. Ty1 retrotransposons belong to the copia elements (pseudoviridae).</text>
</comment>
<comment type="miscellaneous">
    <molecule>Isoform Transposon Ty1-MR1 Gag-Pol polyprotein</molecule>
    <text>Produced by +1 ribosomal frameshifting between codon Leu-435 and Gly-436 of the YMR046C ORF.</text>
</comment>
<comment type="sequence caution" evidence="5">
    <conflict type="erroneous gene model prediction">
        <sequence resource="EMBL-CDS" id="CAA88411"/>
    </conflict>
</comment>
<reference key="1">
    <citation type="journal article" date="1997" name="Nature">
        <title>The nucleotide sequence of Saccharomyces cerevisiae chromosome XIII.</title>
        <authorList>
            <person name="Bowman S."/>
            <person name="Churcher C.M."/>
            <person name="Badcock K."/>
            <person name="Brown D."/>
            <person name="Chillingworth T."/>
            <person name="Connor R."/>
            <person name="Dedman K."/>
            <person name="Devlin K."/>
            <person name="Gentles S."/>
            <person name="Hamlin N."/>
            <person name="Hunt S."/>
            <person name="Jagels K."/>
            <person name="Lye G."/>
            <person name="Moule S."/>
            <person name="Odell C."/>
            <person name="Pearson D."/>
            <person name="Rajandream M.A."/>
            <person name="Rice P."/>
            <person name="Skelton J."/>
            <person name="Walsh S.V."/>
            <person name="Whitehead S."/>
            <person name="Barrell B.G."/>
        </authorList>
    </citation>
    <scope>NUCLEOTIDE SEQUENCE [LARGE SCALE GENOMIC DNA]</scope>
    <source>
        <strain>ATCC 204508 / S288c</strain>
    </source>
</reference>
<reference key="2">
    <citation type="journal article" date="2014" name="G3 (Bethesda)">
        <title>The reference genome sequence of Saccharomyces cerevisiae: Then and now.</title>
        <authorList>
            <person name="Engel S.R."/>
            <person name="Dietrich F.S."/>
            <person name="Fisk D.G."/>
            <person name="Binkley G."/>
            <person name="Balakrishnan R."/>
            <person name="Costanzo M.C."/>
            <person name="Dwight S.S."/>
            <person name="Hitz B.C."/>
            <person name="Karra K."/>
            <person name="Nash R.S."/>
            <person name="Weng S."/>
            <person name="Wong E.D."/>
            <person name="Lloyd P."/>
            <person name="Skrzypek M.S."/>
            <person name="Miyasato S.R."/>
            <person name="Simison M."/>
            <person name="Cherry J.M."/>
        </authorList>
    </citation>
    <scope>GENOME REANNOTATION</scope>
    <source>
        <strain>ATCC 204508 / S288c</strain>
    </source>
</reference>
<reference key="3">
    <citation type="journal article" date="1998" name="Genome Res.">
        <title>Transposable elements and genome organization: a comprehensive survey of retrotransposons revealed by the complete Saccharomyces cerevisiae genome sequence.</title>
        <authorList>
            <person name="Kim J.M."/>
            <person name="Vanguri S."/>
            <person name="Boeke J.D."/>
            <person name="Gabriel A."/>
            <person name="Voytas D.F."/>
        </authorList>
    </citation>
    <scope>NOMENCLATURE</scope>
</reference>
<reference key="4">
    <citation type="journal article" date="2005" name="Cytogenet. Genome Res.">
        <title>Happy together: the life and times of Ty retrotransposons and their hosts.</title>
        <authorList>
            <person name="Lesage P."/>
            <person name="Todeschini A.L."/>
        </authorList>
    </citation>
    <scope>REVIEW</scope>
</reference>
<reference key="5">
    <citation type="journal article" date="2005" name="Cytogenet. Genome Res.">
        <title>Reverse transcriptase and integrase of the Saccharomyces cerevisiae Ty1 element.</title>
        <authorList>
            <person name="Wilhelm F.-X."/>
            <person name="Wilhelm M."/>
            <person name="Gabriel A."/>
        </authorList>
    </citation>
    <scope>REVIEW</scope>
    <scope>DOMAINS</scope>
</reference>
<reference key="6">
    <citation type="journal article" date="2007" name="J. Proteome Res.">
        <title>Large-scale phosphorylation analysis of alpha-factor-arrested Saccharomyces cerevisiae.</title>
        <authorList>
            <person name="Li X."/>
            <person name="Gerber S.A."/>
            <person name="Rudner A.D."/>
            <person name="Beausoleil S.A."/>
            <person name="Haas W."/>
            <person name="Villen J."/>
            <person name="Elias J.E."/>
            <person name="Gygi S.P."/>
        </authorList>
    </citation>
    <scope>IDENTIFICATION BY MASS SPECTROMETRY [LARGE SCALE ANALYSIS]</scope>
    <source>
        <strain>ADR376</strain>
    </source>
</reference>
<reference key="7">
    <citation type="journal article" date="2008" name="Mol. Cell. Proteomics">
        <title>A multidimensional chromatography technology for in-depth phosphoproteome analysis.</title>
        <authorList>
            <person name="Albuquerque C.P."/>
            <person name="Smolka M.B."/>
            <person name="Payne S.H."/>
            <person name="Bafna V."/>
            <person name="Eng J."/>
            <person name="Zhou H."/>
        </authorList>
    </citation>
    <scope>IDENTIFICATION BY MASS SPECTROMETRY [LARGE SCALE ANALYSIS]</scope>
</reference>
<reference key="8">
    <citation type="journal article" date="2009" name="Science">
        <title>Global analysis of Cdk1 substrate phosphorylation sites provides insights into evolution.</title>
        <authorList>
            <person name="Holt L.J."/>
            <person name="Tuch B.B."/>
            <person name="Villen J."/>
            <person name="Johnson A.D."/>
            <person name="Gygi S.P."/>
            <person name="Morgan D.O."/>
        </authorList>
    </citation>
    <scope>IDENTIFICATION BY MASS SPECTROMETRY [LARGE SCALE ANALYSIS]</scope>
</reference>
<accession>Q04214</accession>
<accession>D6VZM0</accession>
<name>YM13B_YEAST</name>
<proteinExistence type="evidence at protein level"/>
<feature type="chain" id="PRO_0000199567" description="Transposon Ty1-MR1 Gag-Pol polyprotein">
    <location>
        <begin position="1"/>
        <end position="1755"/>
    </location>
</feature>
<feature type="chain" id="PRO_0000279127" description="Capsid protein" evidence="1">
    <location>
        <begin position="1"/>
        <end position="401"/>
    </location>
</feature>
<feature type="chain" id="PRO_0000279128" description="Ty1 protease" evidence="1">
    <location>
        <begin position="402"/>
        <end position="582"/>
    </location>
</feature>
<feature type="chain" id="PRO_0000279129" description="Integrase" evidence="1">
    <location>
        <begin position="583"/>
        <end position="1217"/>
    </location>
</feature>
<feature type="chain" id="PRO_0000279130" description="Reverse transcriptase/ribonuclease H" evidence="1">
    <location>
        <begin position="1218"/>
        <end position="1755"/>
    </location>
</feature>
<feature type="domain" description="Integrase catalytic" evidence="2">
    <location>
        <begin position="660"/>
        <end position="835"/>
    </location>
</feature>
<feature type="domain" description="Reverse transcriptase Ty1/copia-type">
    <location>
        <begin position="1338"/>
        <end position="1476"/>
    </location>
</feature>
<feature type="domain" description="RNase H Ty1/copia-type">
    <location>
        <begin position="1610"/>
        <end position="1752"/>
    </location>
</feature>
<feature type="region of interest" description="Disordered" evidence="4">
    <location>
        <begin position="1"/>
        <end position="88"/>
    </location>
</feature>
<feature type="region of interest" description="Disordered" evidence="4">
    <location>
        <begin position="137"/>
        <end position="174"/>
    </location>
</feature>
<feature type="region of interest" description="RNA-binding" evidence="1">
    <location>
        <begin position="299"/>
        <end position="401"/>
    </location>
</feature>
<feature type="region of interest" description="Disordered" evidence="4">
    <location>
        <begin position="350"/>
        <end position="420"/>
    </location>
</feature>
<feature type="region of interest" description="Integrase-type zinc finger-like">
    <location>
        <begin position="583"/>
        <end position="640"/>
    </location>
</feature>
<feature type="region of interest" description="Disordered" evidence="4">
    <location>
        <begin position="958"/>
        <end position="1172"/>
    </location>
</feature>
<feature type="short sequence motif" description="Bipartite nuclear localization signal" evidence="1">
    <location>
        <begin position="1178"/>
        <end position="1212"/>
    </location>
</feature>
<feature type="compositionally biased region" description="Polar residues" evidence="4">
    <location>
        <begin position="1"/>
        <end position="31"/>
    </location>
</feature>
<feature type="compositionally biased region" description="Polar residues" evidence="4">
    <location>
        <begin position="46"/>
        <end position="60"/>
    </location>
</feature>
<feature type="compositionally biased region" description="Polar residues" evidence="4">
    <location>
        <begin position="137"/>
        <end position="168"/>
    </location>
</feature>
<feature type="compositionally biased region" description="Basic and acidic residues" evidence="4">
    <location>
        <begin position="363"/>
        <end position="372"/>
    </location>
</feature>
<feature type="compositionally biased region" description="Polar residues" evidence="4">
    <location>
        <begin position="373"/>
        <end position="411"/>
    </location>
</feature>
<feature type="compositionally biased region" description="Low complexity" evidence="4">
    <location>
        <begin position="960"/>
        <end position="969"/>
    </location>
</feature>
<feature type="compositionally biased region" description="Polar residues" evidence="4">
    <location>
        <begin position="1005"/>
        <end position="1015"/>
    </location>
</feature>
<feature type="compositionally biased region" description="Basic and acidic residues" evidence="4">
    <location>
        <begin position="1038"/>
        <end position="1053"/>
    </location>
</feature>
<feature type="compositionally biased region" description="Polar residues" evidence="4">
    <location>
        <begin position="1054"/>
        <end position="1082"/>
    </location>
</feature>
<feature type="compositionally biased region" description="Polar residues" evidence="4">
    <location>
        <begin position="1095"/>
        <end position="1106"/>
    </location>
</feature>
<feature type="active site" description="For protease activity; shared with dimeric partner" evidence="3">
    <location>
        <position position="461"/>
    </location>
</feature>
<feature type="binding site" evidence="2">
    <location>
        <position position="671"/>
    </location>
    <ligand>
        <name>Mg(2+)</name>
        <dbReference type="ChEBI" id="CHEBI:18420"/>
        <label>1</label>
        <note>catalytic; for integrase activity</note>
    </ligand>
</feature>
<feature type="binding site" evidence="2">
    <location>
        <position position="736"/>
    </location>
    <ligand>
        <name>Mg(2+)</name>
        <dbReference type="ChEBI" id="CHEBI:18420"/>
        <label>1</label>
        <note>catalytic; for integrase activity</note>
    </ligand>
</feature>
<feature type="binding site" evidence="2">
    <location>
        <position position="1346"/>
    </location>
    <ligand>
        <name>Mg(2+)</name>
        <dbReference type="ChEBI" id="CHEBI:18420"/>
        <label>2</label>
        <note>catalytic; for reverse transcriptase activity</note>
    </ligand>
</feature>
<feature type="binding site" evidence="2">
    <location>
        <position position="1427"/>
    </location>
    <ligand>
        <name>Mg(2+)</name>
        <dbReference type="ChEBI" id="CHEBI:18420"/>
        <label>2</label>
        <note>catalytic; for reverse transcriptase activity</note>
    </ligand>
</feature>
<feature type="binding site" evidence="2">
    <location>
        <position position="1428"/>
    </location>
    <ligand>
        <name>Mg(2+)</name>
        <dbReference type="ChEBI" id="CHEBI:18420"/>
        <label>2</label>
        <note>catalytic; for reverse transcriptase activity</note>
    </ligand>
</feature>
<feature type="binding site" evidence="2">
    <location>
        <position position="1610"/>
    </location>
    <ligand>
        <name>Mg(2+)</name>
        <dbReference type="ChEBI" id="CHEBI:18420"/>
        <label>3</label>
        <note>catalytic; for RNase H activity</note>
    </ligand>
</feature>
<feature type="binding site" evidence="2">
    <location>
        <position position="1652"/>
    </location>
    <ligand>
        <name>Mg(2+)</name>
        <dbReference type="ChEBI" id="CHEBI:18420"/>
        <label>3</label>
        <note>catalytic; for RNase H activity</note>
    </ligand>
</feature>
<feature type="binding site" evidence="2">
    <location>
        <position position="1685"/>
    </location>
    <ligand>
        <name>Mg(2+)</name>
        <dbReference type="ChEBI" id="CHEBI:18420"/>
        <label>3</label>
        <note>catalytic; for RNase H activity</note>
    </ligand>
</feature>
<feature type="site" description="Cleavage; by Ty1 protease" evidence="1">
    <location>
        <begin position="401"/>
        <end position="402"/>
    </location>
</feature>
<feature type="site" description="Cleavage; by Ty1 protease" evidence="1">
    <location>
        <begin position="582"/>
        <end position="583"/>
    </location>
</feature>
<feature type="site" description="Cleavage; by Ty1 protease" evidence="1">
    <location>
        <begin position="1217"/>
        <end position="1218"/>
    </location>
</feature>
<sequence>MESQQLSQHSPISHGSACASVTSKEVQTTQDPLDISASKTEECEKVSTQANSQQPTTPLSSAVPENHHHASPQAAQVPLPQNGPYPQQRMMNTQQANISGWPVYGHPSLMPYPPYQMSPMYAPPGAQSQFTQYPQYVGTHLNTPSPESGNSFPDSSSAKSNMTSTNQHVRPPPILTSPNDFLNWVKIYIKFLQNSNLGDIIPTATRKAVRQMTDDELTFLCHTFQLFAPSQFLPPWVKDILSVDYTDIMKILSKSINKMQSDTQEVNDITTLATLHYNGSTPADAFEAEVTNILDRLNNNGIPINNKVACQFIMRGLSGEYKFLRYARHRCIHMTVADLFSDIHSMYEEQQESKRNKSTHRRSPSDEKKDSRTYTNTTKPKSITRNSQKPNNSQSRTARAHNVSTFNNSPGPDNDLIRGSTTEPIQLKNTHDLHLGQELTESTVNHTNHSDDKLPGHLLLDSGASRTLIRSAHHIHSASSNPDINVVDAQKRNIPINAIGDLQFHFQDNTKTSIKVLHTPNIAYDLLSLNELAAVDITACFTKNVLERSDGTVLAPIVKYGDFYWVSKKYLLPSNISVPTINNVHTSESTRKYPYPFIHRMLAHANAQTIRYSLKNNTITYFNESDVDWSSAIDYQCPDCLIGKSTKHRHIKGSRLKYQNSYEPFQYLHTDIFGPVHNLPKSAPSYFISFTDETTKFRWVYPLHDRREDSILDVFTTILAFIKNQFQASVLVIQMDRGSEYTNRTLHKFLEKNGITPCYTTTADSRAHGVAERLNRTLLDDCRTQLQCSGLPNHLWFSAIEFSTIVRNSLASPKSKKSARQHAGLAGLDISTLLPFGQPVIVNDHNPNSKIHPRGIPGYALHPSRNSYGYIIYLPSLKKTVDTTNYVILQGKESRLDQFNYDALTFDEDLNRLTASYHSFIASNEIQQSNDLNIESDHDFQSDIELHPEQLRNVLSKAVSPTDSTPPSTHTEDSKRVSKTNIRAPREVDPNISESNILPSKKRSSTPQISDIESTGSGGMHRLDVPLLAPMSQSNTHESSHASKSKDFRHSDSYSDNETNHTNVPISSTGGTNNKTVPQTSEQETEKRIIHRSPSIDTSSSESNSLHHVVPIKTSDTCPKENTEESIIADLPLPDLPPEPPTELSDSFKELPPINSRQTNSSLGGIGDSNAYTTINSKKRSLEDNETEIKVSRDTWNTKNMRSLEPPRSKKRIHLIAAVKAVKSIKPIRTTLRYDEAITYNKDIKEKEKYIEAYHKEVNQLLKMKTWDTDKYYDRKEIDPKRVINSMFIFNRKRDGTHKARFVARGDIQHPDTYDSGMQSNTVHHYALMTSLSLALDNNYYITQLDISSAYLYADIKEELYIRPPPHLGMNDKLIRLKKSLYGLKQSGANWYETIKSYLIKQCGMEEVRGWSCVFENSQVTICLFVDDMVLFSKNLNSNKRIIDKLKMQYDTKIINLGESDEEIQYDILGLEIKYQRGKYMKLGMENSLTEKIPKLNVPLNPKGRKLSAPGQPGLYIDQQELELEEDDYKMKVHEMQKLIGLASYVGYKFRFDLLYYINTLAQHILFPSKQVLDMTYELIQFIWNTRDKQLIWHKSKPVKPTNKLVVISDASYGNQPYYKSQIGNIYLLNGKVIGGKSTKASLTCTSTTEAEIHAISESVPLLNNLSYLIQELDKKPITKGLLTDSKSTISIIISNNEEKFRNRFFGTKAMRLRDEVSGNHLHVCYIETKKNIADVMTKPLPIKTFKLLTNKWIH</sequence>
<keyword id="KW-0064">Aspartyl protease</keyword>
<keyword id="KW-0067">ATP-binding</keyword>
<keyword id="KW-0963">Cytoplasm</keyword>
<keyword id="KW-0229">DNA integration</keyword>
<keyword id="KW-0233">DNA recombination</keyword>
<keyword id="KW-0238">DNA-binding</keyword>
<keyword id="KW-0239">DNA-directed DNA polymerase</keyword>
<keyword id="KW-0255">Endonuclease</keyword>
<keyword id="KW-0378">Hydrolase</keyword>
<keyword id="KW-0460">Magnesium</keyword>
<keyword id="KW-0479">Metal-binding</keyword>
<keyword id="KW-0511">Multifunctional enzyme</keyword>
<keyword id="KW-0540">Nuclease</keyword>
<keyword id="KW-0547">Nucleotide-binding</keyword>
<keyword id="KW-0548">Nucleotidyltransferase</keyword>
<keyword id="KW-0539">Nucleus</keyword>
<keyword id="KW-0645">Protease</keyword>
<keyword id="KW-1185">Reference proteome</keyword>
<keyword id="KW-0688">Ribosomal frameshifting</keyword>
<keyword id="KW-0694">RNA-binding</keyword>
<keyword id="KW-0695">RNA-directed DNA polymerase</keyword>
<keyword id="KW-0808">Transferase</keyword>
<keyword id="KW-0814">Transposable element</keyword>
<keyword id="KW-0815">Transposition</keyword>
<keyword id="KW-1188">Viral release from host cell</keyword>
<keyword id="KW-0917">Virion maturation</keyword>
<keyword id="KW-0862">Zinc</keyword>
<keyword id="KW-0863">Zinc-finger</keyword>
<evidence type="ECO:0000250" key="1"/>
<evidence type="ECO:0000255" key="2">
    <source>
        <dbReference type="PROSITE-ProRule" id="PRU00457"/>
    </source>
</evidence>
<evidence type="ECO:0000255" key="3">
    <source>
        <dbReference type="PROSITE-ProRule" id="PRU10094"/>
    </source>
</evidence>
<evidence type="ECO:0000256" key="4">
    <source>
        <dbReference type="SAM" id="MobiDB-lite"/>
    </source>
</evidence>
<evidence type="ECO:0000305" key="5"/>
<dbReference type="EC" id="3.4.23.-"/>
<dbReference type="EC" id="2.7.7.49"/>
<dbReference type="EC" id="2.7.7.7"/>
<dbReference type="EC" id="3.1.26.4"/>
<dbReference type="EMBL" id="Z48502">
    <property type="protein sequence ID" value="CAA88411.1"/>
    <property type="status" value="ALT_SEQ"/>
    <property type="molecule type" value="Genomic_DNA"/>
</dbReference>
<dbReference type="EMBL" id="BK006946">
    <property type="protein sequence ID" value="DAA09944.1"/>
    <property type="molecule type" value="Genomic_DNA"/>
</dbReference>
<dbReference type="PIR" id="S40969">
    <property type="entry name" value="S40969"/>
</dbReference>
<dbReference type="PIR" id="S52894">
    <property type="entry name" value="S52894"/>
</dbReference>
<dbReference type="RefSeq" id="NP_013759.1">
    <molecule id="Q04214-1"/>
    <property type="nucleotide sequence ID" value="NM_001182542.2"/>
</dbReference>
<dbReference type="BioGRID" id="35218">
    <property type="interactions" value="15"/>
</dbReference>
<dbReference type="FunCoup" id="Q04214">
    <property type="interactions" value="88"/>
</dbReference>
<dbReference type="IntAct" id="Q04214">
    <property type="interactions" value="4"/>
</dbReference>
<dbReference type="MINT" id="Q04214"/>
<dbReference type="GlyGen" id="Q04214">
    <property type="glycosylation" value="2 sites"/>
</dbReference>
<dbReference type="iPTMnet" id="Q04214"/>
<dbReference type="PaxDb" id="4932-YMR045C"/>
<dbReference type="PeptideAtlas" id="Q04214"/>
<dbReference type="GeneID" id="855062"/>
<dbReference type="KEGG" id="sce:YMR045C"/>
<dbReference type="AGR" id="SGD:S000004648"/>
<dbReference type="SGD" id="S000004648">
    <property type="gene designation" value="YMR045C"/>
</dbReference>
<dbReference type="VEuPathDB" id="FungiDB:YMR045C"/>
<dbReference type="eggNOG" id="KOG0017">
    <property type="taxonomic scope" value="Eukaryota"/>
</dbReference>
<dbReference type="HOGENOM" id="CLU_244151_0_0_1"/>
<dbReference type="InParanoid" id="Q04214"/>
<dbReference type="OrthoDB" id="5423336at2759"/>
<dbReference type="BioGRID-ORCS" id="855062">
    <property type="hits" value="0 hits in 10 CRISPR screens"/>
</dbReference>
<dbReference type="Proteomes" id="UP000002311">
    <property type="component" value="Chromosome XIII"/>
</dbReference>
<dbReference type="RNAct" id="Q04214">
    <property type="molecule type" value="protein"/>
</dbReference>
<dbReference type="GO" id="GO:0005737">
    <property type="term" value="C:cytoplasm"/>
    <property type="evidence" value="ECO:0007669"/>
    <property type="project" value="UniProtKB-SubCell"/>
</dbReference>
<dbReference type="GO" id="GO:0005634">
    <property type="term" value="C:nucleus"/>
    <property type="evidence" value="ECO:0000314"/>
    <property type="project" value="SGD"/>
</dbReference>
<dbReference type="GO" id="GO:0004190">
    <property type="term" value="F:aspartic-type endopeptidase activity"/>
    <property type="evidence" value="ECO:0007669"/>
    <property type="project" value="UniProtKB-KW"/>
</dbReference>
<dbReference type="GO" id="GO:0005524">
    <property type="term" value="F:ATP binding"/>
    <property type="evidence" value="ECO:0007669"/>
    <property type="project" value="UniProtKB-KW"/>
</dbReference>
<dbReference type="GO" id="GO:0003677">
    <property type="term" value="F:DNA binding"/>
    <property type="evidence" value="ECO:0007669"/>
    <property type="project" value="UniProtKB-KW"/>
</dbReference>
<dbReference type="GO" id="GO:0003887">
    <property type="term" value="F:DNA-directed DNA polymerase activity"/>
    <property type="evidence" value="ECO:0007669"/>
    <property type="project" value="UniProtKB-KW"/>
</dbReference>
<dbReference type="GO" id="GO:0003723">
    <property type="term" value="F:RNA binding"/>
    <property type="evidence" value="ECO:0007669"/>
    <property type="project" value="UniProtKB-KW"/>
</dbReference>
<dbReference type="GO" id="GO:0003964">
    <property type="term" value="F:RNA-directed DNA polymerase activity"/>
    <property type="evidence" value="ECO:0007669"/>
    <property type="project" value="UniProtKB-KW"/>
</dbReference>
<dbReference type="GO" id="GO:0004523">
    <property type="term" value="F:RNA-DNA hybrid ribonuclease activity"/>
    <property type="evidence" value="ECO:0007669"/>
    <property type="project" value="UniProtKB-EC"/>
</dbReference>
<dbReference type="GO" id="GO:0008270">
    <property type="term" value="F:zinc ion binding"/>
    <property type="evidence" value="ECO:0007669"/>
    <property type="project" value="UniProtKB-KW"/>
</dbReference>
<dbReference type="GO" id="GO:0015074">
    <property type="term" value="P:DNA integration"/>
    <property type="evidence" value="ECO:0007669"/>
    <property type="project" value="UniProtKB-KW"/>
</dbReference>
<dbReference type="GO" id="GO:0006310">
    <property type="term" value="P:DNA recombination"/>
    <property type="evidence" value="ECO:0007669"/>
    <property type="project" value="UniProtKB-KW"/>
</dbReference>
<dbReference type="GO" id="GO:0006508">
    <property type="term" value="P:proteolysis"/>
    <property type="evidence" value="ECO:0007669"/>
    <property type="project" value="UniProtKB-KW"/>
</dbReference>
<dbReference type="GO" id="GO:0032196">
    <property type="term" value="P:transposition"/>
    <property type="evidence" value="ECO:0007669"/>
    <property type="project" value="UniProtKB-KW"/>
</dbReference>
<dbReference type="GO" id="GO:0075523">
    <property type="term" value="P:viral translational frameshifting"/>
    <property type="evidence" value="ECO:0007669"/>
    <property type="project" value="UniProtKB-KW"/>
</dbReference>
<dbReference type="CDD" id="cd09272">
    <property type="entry name" value="RNase_HI_RT_Ty1"/>
    <property type="match status" value="1"/>
</dbReference>
<dbReference type="FunFam" id="3.30.420.10:FF:000050">
    <property type="entry name" value="Transposon Ty2-DR3 Gag-Pol polyprotein"/>
    <property type="match status" value="1"/>
</dbReference>
<dbReference type="Gene3D" id="3.30.420.10">
    <property type="entry name" value="Ribonuclease H-like superfamily/Ribonuclease H"/>
    <property type="match status" value="1"/>
</dbReference>
<dbReference type="InterPro" id="IPR001969">
    <property type="entry name" value="Aspartic_peptidase_AS"/>
</dbReference>
<dbReference type="InterPro" id="IPR043502">
    <property type="entry name" value="DNA/RNA_pol_sf"/>
</dbReference>
<dbReference type="InterPro" id="IPR001584">
    <property type="entry name" value="Integrase_cat-core"/>
</dbReference>
<dbReference type="InterPro" id="IPR039537">
    <property type="entry name" value="Retrotran_Ty1/copia-like"/>
</dbReference>
<dbReference type="InterPro" id="IPR012337">
    <property type="entry name" value="RNaseH-like_sf"/>
</dbReference>
<dbReference type="InterPro" id="IPR036397">
    <property type="entry name" value="RNaseH_sf"/>
</dbReference>
<dbReference type="InterPro" id="IPR013103">
    <property type="entry name" value="RVT_2"/>
</dbReference>
<dbReference type="InterPro" id="IPR015820">
    <property type="entry name" value="TYA"/>
</dbReference>
<dbReference type="PANTHER" id="PTHR42648">
    <property type="entry name" value="TRANSPOSASE, PUTATIVE-RELATED"/>
    <property type="match status" value="1"/>
</dbReference>
<dbReference type="PANTHER" id="PTHR42648:SF11">
    <property type="entry name" value="TRANSPOSON TY4-P GAG-POL POLYPROTEIN"/>
    <property type="match status" value="1"/>
</dbReference>
<dbReference type="Pfam" id="PF00665">
    <property type="entry name" value="rve"/>
    <property type="match status" value="1"/>
</dbReference>
<dbReference type="Pfam" id="PF07727">
    <property type="entry name" value="RVT_2"/>
    <property type="match status" value="1"/>
</dbReference>
<dbReference type="Pfam" id="PF01021">
    <property type="entry name" value="TYA"/>
    <property type="match status" value="1"/>
</dbReference>
<dbReference type="SUPFAM" id="SSF56672">
    <property type="entry name" value="DNA/RNA polymerases"/>
    <property type="match status" value="1"/>
</dbReference>
<dbReference type="SUPFAM" id="SSF53098">
    <property type="entry name" value="Ribonuclease H-like"/>
    <property type="match status" value="1"/>
</dbReference>
<dbReference type="PROSITE" id="PS00141">
    <property type="entry name" value="ASP_PROTEASE"/>
    <property type="match status" value="1"/>
</dbReference>
<dbReference type="PROSITE" id="PS50994">
    <property type="entry name" value="INTEGRASE"/>
    <property type="match status" value="1"/>
</dbReference>
<organism>
    <name type="scientific">Saccharomyces cerevisiae (strain ATCC 204508 / S288c)</name>
    <name type="common">Baker's yeast</name>
    <dbReference type="NCBI Taxonomy" id="559292"/>
    <lineage>
        <taxon>Eukaryota</taxon>
        <taxon>Fungi</taxon>
        <taxon>Dikarya</taxon>
        <taxon>Ascomycota</taxon>
        <taxon>Saccharomycotina</taxon>
        <taxon>Saccharomycetes</taxon>
        <taxon>Saccharomycetales</taxon>
        <taxon>Saccharomycetaceae</taxon>
        <taxon>Saccharomyces</taxon>
    </lineage>
</organism>
<protein>
    <recommendedName>
        <fullName>Transposon Ty1-MR1 Gag-Pol polyprotein</fullName>
    </recommendedName>
    <alternativeName>
        <fullName>Gag-Pol-p199</fullName>
    </alternativeName>
    <alternativeName>
        <fullName>TY1A-TY1B</fullName>
    </alternativeName>
    <alternativeName>
        <fullName>Transposon Ty1 TYA-TYB polyprotein</fullName>
    </alternativeName>
    <alternativeName>
        <fullName>p190</fullName>
    </alternativeName>
    <component>
        <recommendedName>
            <fullName>Capsid protein</fullName>
            <shortName>CA</shortName>
        </recommendedName>
        <alternativeName>
            <fullName>Gag-p45</fullName>
        </alternativeName>
        <alternativeName>
            <fullName>p54</fullName>
        </alternativeName>
    </component>
    <component>
        <recommendedName>
            <fullName>Ty1 protease</fullName>
            <shortName>PR</shortName>
            <ecNumber>3.4.23.-</ecNumber>
        </recommendedName>
        <alternativeName>
            <fullName>Pol-p20</fullName>
        </alternativeName>
        <alternativeName>
            <fullName>p23</fullName>
        </alternativeName>
    </component>
    <component>
        <recommendedName>
            <fullName>Integrase</fullName>
            <shortName>IN</shortName>
        </recommendedName>
        <alternativeName>
            <fullName>Pol-p71</fullName>
        </alternativeName>
        <alternativeName>
            <fullName>p84</fullName>
        </alternativeName>
        <alternativeName>
            <fullName>p90</fullName>
        </alternativeName>
    </component>
    <component>
        <recommendedName>
            <fullName>Reverse transcriptase/ribonuclease H</fullName>
            <shortName>RT</shortName>
            <shortName>RT-RH</shortName>
            <ecNumber>2.7.7.49</ecNumber>
            <ecNumber>2.7.7.7</ecNumber>
            <ecNumber>3.1.26.4</ecNumber>
        </recommendedName>
        <alternativeName>
            <fullName>Pol-p63</fullName>
        </alternativeName>
        <alternativeName>
            <fullName>p60</fullName>
        </alternativeName>
    </component>
</protein>